<gene>
    <name type="primary">RPL27</name>
    <name type="ORF">SOVF_107450</name>
</gene>
<proteinExistence type="evidence at protein level"/>
<reference key="1">
    <citation type="journal article" date="2014" name="Nature">
        <title>The genome of the recently domesticated crop plant sugar beet (Beta vulgaris).</title>
        <authorList>
            <person name="Dohm J.C."/>
            <person name="Minoche A.E."/>
            <person name="Holtgraewe D."/>
            <person name="Capella-Gutierrez S."/>
            <person name="Zakrzewski F."/>
            <person name="Tafer H."/>
            <person name="Rupp O."/>
            <person name="Soerensen T.R."/>
            <person name="Stracke R."/>
            <person name="Reinhardt R."/>
            <person name="Goesmann A."/>
            <person name="Kraft T."/>
            <person name="Schulz B."/>
            <person name="Stadler P.F."/>
            <person name="Schmidt T."/>
            <person name="Gabaldon T."/>
            <person name="Lehrach H."/>
            <person name="Weisshaar B."/>
            <person name="Himmelbauer H."/>
        </authorList>
    </citation>
    <scope>NUCLEOTIDE SEQUENCE [LARGE SCALE GENOMIC DNA]</scope>
    <source>
        <strain>cv. Viroflay</strain>
        <tissue>Leaf</tissue>
    </source>
</reference>
<reference key="2">
    <citation type="journal article" date="2000" name="J. Biol. Chem.">
        <title>The plastid ribosomal proteins. Identification of all the proteins in the 50S subunit of an organelle ribosome (chloroplast).</title>
        <authorList>
            <person name="Yamaguchi K."/>
            <person name="Subramanian A.R."/>
        </authorList>
    </citation>
    <scope>PROTEIN SEQUENCE OF 58-115</scope>
    <scope>SUBUNIT</scope>
    <scope>SUBCELLULAR LOCATION</scope>
    <scope>MASS SPECTROMETRY</scope>
    <source>
        <strain>cv. Alwaro</strain>
        <tissue>Leaf</tissue>
    </source>
</reference>
<reference key="3">
    <citation type="journal article" date="2007" name="Proc. Natl. Acad. Sci. U.S.A.">
        <title>Cryo-EM study of the spinach chloroplast ribosome reveals the structural and functional roles of plastid-specific ribosomal proteins.</title>
        <authorList>
            <person name="Sharma M.R."/>
            <person name="Wilson D.N."/>
            <person name="Datta P.P."/>
            <person name="Barat C."/>
            <person name="Schluenzen F."/>
            <person name="Fucini P."/>
            <person name="Agrawal R.K."/>
        </authorList>
    </citation>
    <scope>STRUCTURE BY ELECTRON MICROSCOPY (9.4 ANGSTROMS)</scope>
</reference>
<reference key="4">
    <citation type="journal article" date="2016" name="Sci. Rep.">
        <title>Cryo-EM structure of the large subunit of the spinach chloroplast ribosome.</title>
        <authorList>
            <person name="Ahmed T."/>
            <person name="Yin Z."/>
            <person name="Bhushan S."/>
        </authorList>
    </citation>
    <scope>STRUCTURE BY ELECTRON MICROSCOPY (3.50 ANGSTROMS)</scope>
</reference>
<reference key="5">
    <citation type="journal article" date="2017" name="EMBO J.">
        <title>The complete structure of the chloroplast 70S ribosome in complex with translation factor pY.</title>
        <authorList>
            <person name="Bieri P."/>
            <person name="Leibundgut M."/>
            <person name="Saurer M."/>
            <person name="Boehringer D."/>
            <person name="Ban N."/>
        </authorList>
    </citation>
    <scope>STRUCTURE BY ELECTRON MICROSCOPY (3.25 ANGSTROMS)</scope>
    <scope>SUBUNIT</scope>
    <scope>SUBCELLULAR LOCATION</scope>
</reference>
<feature type="transit peptide" description="Chloroplast" evidence="3">
    <location>
        <begin position="1"/>
        <end position="57"/>
    </location>
</feature>
<feature type="chain" id="PRO_0000249406" description="Large ribosomal subunit protein bL27c">
    <location>
        <begin position="58"/>
        <end position="194"/>
    </location>
</feature>
<feature type="region of interest" description="Disordered" evidence="2">
    <location>
        <begin position="57"/>
        <end position="76"/>
    </location>
</feature>
<feature type="strand" evidence="9">
    <location>
        <begin position="78"/>
        <end position="81"/>
    </location>
</feature>
<feature type="strand" evidence="9">
    <location>
        <begin position="92"/>
        <end position="95"/>
    </location>
</feature>
<feature type="strand" evidence="9">
    <location>
        <begin position="100"/>
        <end position="103"/>
    </location>
</feature>
<feature type="strand" evidence="9">
    <location>
        <begin position="107"/>
        <end position="109"/>
    </location>
</feature>
<feature type="strand" evidence="9">
    <location>
        <begin position="115"/>
        <end position="127"/>
    </location>
</feature>
<feature type="strand" evidence="9">
    <location>
        <begin position="129"/>
        <end position="131"/>
    </location>
</feature>
<feature type="strand" evidence="9">
    <location>
        <begin position="133"/>
        <end position="138"/>
    </location>
</feature>
<feature type="strand" evidence="9">
    <location>
        <begin position="147"/>
        <end position="149"/>
    </location>
</feature>
<feature type="helix" evidence="9">
    <location>
        <begin position="150"/>
        <end position="167"/>
    </location>
</feature>
<feature type="turn" evidence="9">
    <location>
        <begin position="168"/>
        <end position="171"/>
    </location>
</feature>
<organism>
    <name type="scientific">Spinacia oleracea</name>
    <name type="common">Spinach</name>
    <dbReference type="NCBI Taxonomy" id="3562"/>
    <lineage>
        <taxon>Eukaryota</taxon>
        <taxon>Viridiplantae</taxon>
        <taxon>Streptophyta</taxon>
        <taxon>Embryophyta</taxon>
        <taxon>Tracheophyta</taxon>
        <taxon>Spermatophyta</taxon>
        <taxon>Magnoliopsida</taxon>
        <taxon>eudicotyledons</taxon>
        <taxon>Gunneridae</taxon>
        <taxon>Pentapetalae</taxon>
        <taxon>Caryophyllales</taxon>
        <taxon>Chenopodiaceae</taxon>
        <taxon>Chenopodioideae</taxon>
        <taxon>Anserineae</taxon>
        <taxon>Spinacia</taxon>
    </lineage>
</organism>
<evidence type="ECO:0000255" key="1"/>
<evidence type="ECO:0000256" key="2">
    <source>
        <dbReference type="SAM" id="MobiDB-lite"/>
    </source>
</evidence>
<evidence type="ECO:0000269" key="3">
    <source>
    </source>
</evidence>
<evidence type="ECO:0000269" key="4">
    <source>
    </source>
</evidence>
<evidence type="ECO:0000303" key="5">
    <source>
    </source>
</evidence>
<evidence type="ECO:0000303" key="6">
    <source>
    </source>
</evidence>
<evidence type="ECO:0000305" key="7">
    <source>
    </source>
</evidence>
<evidence type="ECO:0000305" key="8">
    <source>
    </source>
</evidence>
<evidence type="ECO:0007829" key="9">
    <source>
        <dbReference type="PDB" id="5MMI"/>
    </source>
</evidence>
<protein>
    <recommendedName>
        <fullName evidence="6">Large ribosomal subunit protein bL27c</fullName>
    </recommendedName>
    <alternativeName>
        <fullName evidence="5">50S ribosomal protein L27, chloroplastic</fullName>
    </alternativeName>
    <alternativeName>
        <fullName>CL27</fullName>
    </alternativeName>
</protein>
<keyword id="KW-0002">3D-structure</keyword>
<keyword id="KW-0150">Chloroplast</keyword>
<keyword id="KW-0903">Direct protein sequencing</keyword>
<keyword id="KW-0934">Plastid</keyword>
<keyword id="KW-1185">Reference proteome</keyword>
<keyword id="KW-0687">Ribonucleoprotein</keyword>
<keyword id="KW-0689">Ribosomal protein</keyword>
<keyword id="KW-0809">Transit peptide</keyword>
<sequence length="194" mass="21329">MAVTTSMSFNLMASFRGMSLSSSSSSSFFKGEFGPSSLRLPNKSPLSVSPFPLTIESAHKKGAGSTKNGRDSKGQRLGVKIYGDQVAKPGAIIIRQRGTKFHPGKNVGIGKDHTIFALIDGLVKFEKYGPDKKKVSVYPREIQPENPNSYRARKRENFRLQREKKKARREGYSFQPQLILASAATDNADESAVC</sequence>
<comment type="function">
    <text evidence="7 8">Component of the chloroplast ribosome (chloro-ribosome), a dedicated translation machinery responsible for the synthesis of chloroplast genome-encoded proteins, including proteins of the transcription and translation machinery and components of the photosynthetic apparatus.</text>
</comment>
<comment type="subunit">
    <text evidence="3 4">Component of the chloroplast large ribosomal subunit (LSU). Mature 70S chloroplast ribosomes of higher plants consist of a small (30S) and a large (50S) subunit. The 30S small subunit contains 1 molecule of ribosomal RNA (16S rRNA) and 24 different proteins. The 50S large subunit contains 3 rRNA molecules (23S, 5S and 4.5S rRNA) and 33 different proteins.</text>
</comment>
<comment type="subcellular location">
    <subcellularLocation>
        <location evidence="3 4">Plastid</location>
        <location evidence="3 4">Chloroplast</location>
    </subcellularLocation>
</comment>
<comment type="mass spectrometry" mass="13650.2" method="Electrospray" evidence="3"/>
<comment type="similarity">
    <text evidence="1">Belongs to the bacterial ribosomal protein bL27 family.</text>
</comment>
<dbReference type="EMBL" id="KQ150476">
    <property type="protein sequence ID" value="KNA14420.1"/>
    <property type="molecule type" value="Genomic_DNA"/>
</dbReference>
<dbReference type="PDB" id="4V61">
    <property type="method" value="EM"/>
    <property type="resolution" value="9.40 A"/>
    <property type="chains" value="X=58-115"/>
</dbReference>
<dbReference type="PDB" id="5H1S">
    <property type="method" value="EM"/>
    <property type="resolution" value="3.50 A"/>
    <property type="chains" value="X=58-194"/>
</dbReference>
<dbReference type="PDB" id="5MLC">
    <property type="method" value="EM"/>
    <property type="resolution" value="3.90 A"/>
    <property type="chains" value="X=1-194"/>
</dbReference>
<dbReference type="PDB" id="5MMI">
    <property type="method" value="EM"/>
    <property type="resolution" value="3.25 A"/>
    <property type="chains" value="X=1-194"/>
</dbReference>
<dbReference type="PDB" id="5MMM">
    <property type="method" value="EM"/>
    <property type="resolution" value="3.40 A"/>
    <property type="chains" value="X=1-194"/>
</dbReference>
<dbReference type="PDB" id="5X8P">
    <property type="method" value="EM"/>
    <property type="resolution" value="3.40 A"/>
    <property type="chains" value="X=58-194"/>
</dbReference>
<dbReference type="PDB" id="5X8T">
    <property type="method" value="EM"/>
    <property type="resolution" value="3.30 A"/>
    <property type="chains" value="X=58-194"/>
</dbReference>
<dbReference type="PDB" id="6ERI">
    <property type="method" value="EM"/>
    <property type="resolution" value="3.00 A"/>
    <property type="chains" value="AW=60-173"/>
</dbReference>
<dbReference type="PDBsum" id="4V61"/>
<dbReference type="PDBsum" id="5H1S"/>
<dbReference type="PDBsum" id="5MLC"/>
<dbReference type="PDBsum" id="5MMI"/>
<dbReference type="PDBsum" id="5MMM"/>
<dbReference type="PDBsum" id="5X8P"/>
<dbReference type="PDBsum" id="5X8T"/>
<dbReference type="PDBsum" id="6ERI"/>
<dbReference type="EMDB" id="EMD-3525"/>
<dbReference type="EMDB" id="EMD-3531"/>
<dbReference type="EMDB" id="EMD-3533"/>
<dbReference type="EMDB" id="EMD-3941"/>
<dbReference type="EMDB" id="EMD-6709"/>
<dbReference type="EMDB" id="EMD-6711"/>
<dbReference type="EMDB" id="EMD-9572"/>
<dbReference type="SMR" id="P82190"/>
<dbReference type="IntAct" id="P82190">
    <property type="interactions" value="1"/>
</dbReference>
<dbReference type="STRING" id="3562.P82190"/>
<dbReference type="OrthoDB" id="1867012at2759"/>
<dbReference type="Proteomes" id="UP001155700">
    <property type="component" value="Unplaced"/>
</dbReference>
<dbReference type="GO" id="GO:0009507">
    <property type="term" value="C:chloroplast"/>
    <property type="evidence" value="ECO:0007669"/>
    <property type="project" value="UniProtKB-SubCell"/>
</dbReference>
<dbReference type="GO" id="GO:1990904">
    <property type="term" value="C:ribonucleoprotein complex"/>
    <property type="evidence" value="ECO:0007669"/>
    <property type="project" value="UniProtKB-KW"/>
</dbReference>
<dbReference type="GO" id="GO:0005840">
    <property type="term" value="C:ribosome"/>
    <property type="evidence" value="ECO:0007669"/>
    <property type="project" value="UniProtKB-KW"/>
</dbReference>
<dbReference type="GO" id="GO:0003735">
    <property type="term" value="F:structural constituent of ribosome"/>
    <property type="evidence" value="ECO:0000318"/>
    <property type="project" value="GO_Central"/>
</dbReference>
<dbReference type="GO" id="GO:0006412">
    <property type="term" value="P:translation"/>
    <property type="evidence" value="ECO:0007669"/>
    <property type="project" value="InterPro"/>
</dbReference>
<dbReference type="FunFam" id="2.40.50.100:FF:000051">
    <property type="entry name" value="50S ribosomal protein L27"/>
    <property type="match status" value="1"/>
</dbReference>
<dbReference type="Gene3D" id="2.40.50.100">
    <property type="match status" value="1"/>
</dbReference>
<dbReference type="HAMAP" id="MF_00539">
    <property type="entry name" value="Ribosomal_bL27"/>
    <property type="match status" value="1"/>
</dbReference>
<dbReference type="InterPro" id="IPR001684">
    <property type="entry name" value="Ribosomal_bL27"/>
</dbReference>
<dbReference type="InterPro" id="IPR018261">
    <property type="entry name" value="Ribosomal_bL27_CS"/>
</dbReference>
<dbReference type="NCBIfam" id="TIGR00062">
    <property type="entry name" value="L27"/>
    <property type="match status" value="1"/>
</dbReference>
<dbReference type="PANTHER" id="PTHR15893:SF0">
    <property type="entry name" value="LARGE RIBOSOMAL SUBUNIT PROTEIN BL27M"/>
    <property type="match status" value="1"/>
</dbReference>
<dbReference type="PANTHER" id="PTHR15893">
    <property type="entry name" value="RIBOSOMAL PROTEIN L27"/>
    <property type="match status" value="1"/>
</dbReference>
<dbReference type="Pfam" id="PF01016">
    <property type="entry name" value="Ribosomal_L27"/>
    <property type="match status" value="1"/>
</dbReference>
<dbReference type="PRINTS" id="PR00063">
    <property type="entry name" value="RIBOSOMALL27"/>
</dbReference>
<dbReference type="SUPFAM" id="SSF110324">
    <property type="entry name" value="Ribosomal L27 protein-like"/>
    <property type="match status" value="1"/>
</dbReference>
<dbReference type="PROSITE" id="PS00831">
    <property type="entry name" value="RIBOSOMAL_L27"/>
    <property type="match status" value="1"/>
</dbReference>
<name>RK27_SPIOL</name>
<accession>P82190</accession>
<accession>A0A0K9R4I2</accession>